<name>RL31B_STRPD</name>
<proteinExistence type="inferred from homology"/>
<keyword id="KW-0687">Ribonucleoprotein</keyword>
<keyword id="KW-0689">Ribosomal protein</keyword>
<dbReference type="EMBL" id="CP000260">
    <property type="protein sequence ID" value="ABF33668.1"/>
    <property type="molecule type" value="Genomic_DNA"/>
</dbReference>
<dbReference type="RefSeq" id="WP_002985307.1">
    <property type="nucleotide sequence ID" value="NZ_CVUH01000002.1"/>
</dbReference>
<dbReference type="SMR" id="Q1JHR8"/>
<dbReference type="KEGG" id="sph:MGAS10270_Spy0603"/>
<dbReference type="HOGENOM" id="CLU_114306_2_1_9"/>
<dbReference type="Proteomes" id="UP000002436">
    <property type="component" value="Chromosome"/>
</dbReference>
<dbReference type="GO" id="GO:1990904">
    <property type="term" value="C:ribonucleoprotein complex"/>
    <property type="evidence" value="ECO:0007669"/>
    <property type="project" value="UniProtKB-KW"/>
</dbReference>
<dbReference type="GO" id="GO:0005840">
    <property type="term" value="C:ribosome"/>
    <property type="evidence" value="ECO:0007669"/>
    <property type="project" value="UniProtKB-KW"/>
</dbReference>
<dbReference type="GO" id="GO:0003735">
    <property type="term" value="F:structural constituent of ribosome"/>
    <property type="evidence" value="ECO:0007669"/>
    <property type="project" value="InterPro"/>
</dbReference>
<dbReference type="GO" id="GO:0006412">
    <property type="term" value="P:translation"/>
    <property type="evidence" value="ECO:0007669"/>
    <property type="project" value="UniProtKB-UniRule"/>
</dbReference>
<dbReference type="Gene3D" id="4.10.830.30">
    <property type="entry name" value="Ribosomal protein L31"/>
    <property type="match status" value="1"/>
</dbReference>
<dbReference type="HAMAP" id="MF_00502">
    <property type="entry name" value="Ribosomal_bL31_2"/>
    <property type="match status" value="1"/>
</dbReference>
<dbReference type="InterPro" id="IPR034704">
    <property type="entry name" value="Ribosomal_bL28/bL31-like_sf"/>
</dbReference>
<dbReference type="InterPro" id="IPR002150">
    <property type="entry name" value="Ribosomal_bL31"/>
</dbReference>
<dbReference type="InterPro" id="IPR027493">
    <property type="entry name" value="Ribosomal_bL31_B"/>
</dbReference>
<dbReference type="InterPro" id="IPR042105">
    <property type="entry name" value="Ribosomal_bL31_sf"/>
</dbReference>
<dbReference type="NCBIfam" id="TIGR00105">
    <property type="entry name" value="L31"/>
    <property type="match status" value="1"/>
</dbReference>
<dbReference type="NCBIfam" id="NF002462">
    <property type="entry name" value="PRK01678.1"/>
    <property type="match status" value="1"/>
</dbReference>
<dbReference type="PANTHER" id="PTHR33280">
    <property type="entry name" value="50S RIBOSOMAL PROTEIN L31, CHLOROPLASTIC"/>
    <property type="match status" value="1"/>
</dbReference>
<dbReference type="PANTHER" id="PTHR33280:SF1">
    <property type="entry name" value="LARGE RIBOSOMAL SUBUNIT PROTEIN BL31C"/>
    <property type="match status" value="1"/>
</dbReference>
<dbReference type="Pfam" id="PF01197">
    <property type="entry name" value="Ribosomal_L31"/>
    <property type="match status" value="1"/>
</dbReference>
<dbReference type="PRINTS" id="PR01249">
    <property type="entry name" value="RIBOSOMALL31"/>
</dbReference>
<dbReference type="SUPFAM" id="SSF143800">
    <property type="entry name" value="L28p-like"/>
    <property type="match status" value="1"/>
</dbReference>
<dbReference type="PROSITE" id="PS01143">
    <property type="entry name" value="RIBOSOMAL_L31"/>
    <property type="match status" value="1"/>
</dbReference>
<reference key="1">
    <citation type="journal article" date="2006" name="Proc. Natl. Acad. Sci. U.S.A.">
        <title>Molecular genetic anatomy of inter- and intraserotype variation in the human bacterial pathogen group A Streptococcus.</title>
        <authorList>
            <person name="Beres S.B."/>
            <person name="Richter E.W."/>
            <person name="Nagiec M.J."/>
            <person name="Sumby P."/>
            <person name="Porcella S.F."/>
            <person name="DeLeo F.R."/>
            <person name="Musser J.M."/>
        </authorList>
    </citation>
    <scope>NUCLEOTIDE SEQUENCE [LARGE SCALE GENOMIC DNA]</scope>
    <source>
        <strain>MGAS10270</strain>
    </source>
</reference>
<comment type="subunit">
    <text evidence="1">Part of the 50S ribosomal subunit.</text>
</comment>
<comment type="similarity">
    <text evidence="1">Belongs to the bacterial ribosomal protein bL31 family. Type B subfamily.</text>
</comment>
<organism>
    <name type="scientific">Streptococcus pyogenes serotype M2 (strain MGAS10270)</name>
    <dbReference type="NCBI Taxonomy" id="370552"/>
    <lineage>
        <taxon>Bacteria</taxon>
        <taxon>Bacillati</taxon>
        <taxon>Bacillota</taxon>
        <taxon>Bacilli</taxon>
        <taxon>Lactobacillales</taxon>
        <taxon>Streptococcaceae</taxon>
        <taxon>Streptococcus</taxon>
    </lineage>
</organism>
<sequence length="86" mass="9854">MRKDIHPDYRPVVFLDTTTGYQFLSGSTKASKETVEFEGETYPLIRVEISSDSHPFYTGRQKFTQADGRVDRFNKKYGLKDANAAK</sequence>
<feature type="chain" id="PRO_0000259128" description="Large ribosomal subunit protein bL31B">
    <location>
        <begin position="1"/>
        <end position="86"/>
    </location>
</feature>
<protein>
    <recommendedName>
        <fullName evidence="1">Large ribosomal subunit protein bL31B</fullName>
    </recommendedName>
    <alternativeName>
        <fullName evidence="2">50S ribosomal protein L31 type B</fullName>
    </alternativeName>
</protein>
<accession>Q1JHR8</accession>
<evidence type="ECO:0000255" key="1">
    <source>
        <dbReference type="HAMAP-Rule" id="MF_00502"/>
    </source>
</evidence>
<evidence type="ECO:0000305" key="2"/>
<gene>
    <name evidence="1" type="primary">rpmE2</name>
    <name type="ordered locus">MGAS10270_Spy0603</name>
</gene>